<protein>
    <recommendedName>
        <fullName>Interferon regulatory factor 2-binding protein 2</fullName>
        <shortName>IRF-2-binding protein 2</shortName>
        <shortName>IRF-2BP2</shortName>
    </recommendedName>
</protein>
<feature type="chain" id="PRO_0000328737" description="Interferon regulatory factor 2-binding protein 2">
    <location>
        <begin position="1"/>
        <end position="537"/>
    </location>
</feature>
<feature type="zinc finger region" description="RING-type; degenerate">
    <location>
        <begin position="456"/>
        <end position="503"/>
    </location>
</feature>
<feature type="region of interest" description="Disordered" evidence="2">
    <location>
        <begin position="60"/>
        <end position="179"/>
    </location>
</feature>
<feature type="region of interest" description="Disordered" evidence="2">
    <location>
        <begin position="209"/>
        <end position="254"/>
    </location>
</feature>
<feature type="region of interest" description="Disordered" evidence="2">
    <location>
        <begin position="268"/>
        <end position="366"/>
    </location>
</feature>
<feature type="region of interest" description="Disordered" evidence="2">
    <location>
        <begin position="382"/>
        <end position="446"/>
    </location>
</feature>
<feature type="region of interest" description="Cys-rich">
    <location>
        <begin position="456"/>
        <end position="503"/>
    </location>
</feature>
<feature type="compositionally biased region" description="Low complexity" evidence="2">
    <location>
        <begin position="73"/>
        <end position="84"/>
    </location>
</feature>
<feature type="compositionally biased region" description="Polar residues" evidence="2">
    <location>
        <begin position="162"/>
        <end position="176"/>
    </location>
</feature>
<feature type="compositionally biased region" description="Basic and acidic residues" evidence="2">
    <location>
        <begin position="224"/>
        <end position="254"/>
    </location>
</feature>
<feature type="compositionally biased region" description="Basic and acidic residues" evidence="2">
    <location>
        <begin position="270"/>
        <end position="281"/>
    </location>
</feature>
<feature type="compositionally biased region" description="Polar residues" evidence="2">
    <location>
        <begin position="334"/>
        <end position="366"/>
    </location>
</feature>
<feature type="compositionally biased region" description="Polar residues" evidence="2">
    <location>
        <begin position="389"/>
        <end position="400"/>
    </location>
</feature>
<feature type="compositionally biased region" description="Polar residues" evidence="2">
    <location>
        <begin position="423"/>
        <end position="432"/>
    </location>
</feature>
<reference key="1">
    <citation type="submission" date="2003-01" db="EMBL/GenBank/DDBJ databases">
        <authorList>
            <consortium name="NIH - Xenopus Gene Collection (XGC) project"/>
        </authorList>
    </citation>
    <scope>NUCLEOTIDE SEQUENCE [LARGE SCALE MRNA]</scope>
    <source>
        <tissue>Embryo</tissue>
    </source>
</reference>
<keyword id="KW-0479">Metal-binding</keyword>
<keyword id="KW-0539">Nucleus</keyword>
<keyword id="KW-1185">Reference proteome</keyword>
<keyword id="KW-0678">Repressor</keyword>
<keyword id="KW-0804">Transcription</keyword>
<keyword id="KW-0805">Transcription regulation</keyword>
<keyword id="KW-0862">Zinc</keyword>
<keyword id="KW-0863">Zinc-finger</keyword>
<organism>
    <name type="scientific">Xenopus laevis</name>
    <name type="common">African clawed frog</name>
    <dbReference type="NCBI Taxonomy" id="8355"/>
    <lineage>
        <taxon>Eukaryota</taxon>
        <taxon>Metazoa</taxon>
        <taxon>Chordata</taxon>
        <taxon>Craniata</taxon>
        <taxon>Vertebrata</taxon>
        <taxon>Euteleostomi</taxon>
        <taxon>Amphibia</taxon>
        <taxon>Batrachia</taxon>
        <taxon>Anura</taxon>
        <taxon>Pipoidea</taxon>
        <taxon>Pipidae</taxon>
        <taxon>Xenopodinae</taxon>
        <taxon>Xenopus</taxon>
        <taxon>Xenopus</taxon>
    </lineage>
</organism>
<name>I2BP2_XENLA</name>
<sequence length="537" mass="57244">MSSATVAASRRQSCYLCDLPRMPWAMIWDFTEPVCRGCVNYEGADRIEFVIETARHLKRAHGFQEGRSPGPSPSSSSSSSSSSSVKPQLSAKEMAQIGHTMGGPEGVTRTSQQPPPPQCLDRYSLERPPPPRLGSEYGLGRQVNGILLPNGFPKPEEPPELNRQSPNPRRTSTVPQSLGALMNGTPMGSARATIGLSGASLVAAAAATTSADLSGKRPGSVSSSEHDGKEKHRADSYSELGENHKSRAEEWISKPKTVRDTLMAMQHSHSPFDSKFKKDTGPGRVLSFEANNPVSKSGARGGRKRKTSPEPEGEGGSVKINGEGQPWLPATESLKISTMASPSFISPPSTVSPHSNRTTPPEAAQNGQSPMAALILVADNAGGNHASKDANQVHSTTRRNSSSPPSPSSMNQRRMAPRDVPSQLPSGGTSSHAGMEQGLPQSIPDSSIPNSIPLCCTLCHERLEDTHFVQCPSVPSHKFCFPCSRQSIKQQGSSGEVYCPSGEKCPLVGSNVPWAFMQGEIATILAGDVKVKKERDS</sequence>
<proteinExistence type="evidence at transcript level"/>
<evidence type="ECO:0000250" key="1"/>
<evidence type="ECO:0000256" key="2">
    <source>
        <dbReference type="SAM" id="MobiDB-lite"/>
    </source>
</evidence>
<evidence type="ECO:0000305" key="3"/>
<accession>Q7ZXS3</accession>
<comment type="function">
    <text evidence="1">Acts as a transcriptional repressor.</text>
</comment>
<comment type="subcellular location">
    <subcellularLocation>
        <location evidence="1">Nucleus</location>
    </subcellularLocation>
</comment>
<comment type="similarity">
    <text evidence="3">Belongs to the IRF2BP family.</text>
</comment>
<dbReference type="EMBL" id="BC044275">
    <property type="protein sequence ID" value="AAH44275.1"/>
    <property type="molecule type" value="mRNA"/>
</dbReference>
<dbReference type="RefSeq" id="NP_001080568.1">
    <property type="nucleotide sequence ID" value="NM_001087099.1"/>
</dbReference>
<dbReference type="SMR" id="Q7ZXS3"/>
<dbReference type="DNASU" id="380260"/>
<dbReference type="GeneID" id="380260"/>
<dbReference type="KEGG" id="xla:380260"/>
<dbReference type="AGR" id="Xenbase:XB-GENE-1015586"/>
<dbReference type="CTD" id="380260"/>
<dbReference type="OMA" id="FKKEPGM"/>
<dbReference type="OrthoDB" id="10065080at2759"/>
<dbReference type="Proteomes" id="UP000186698">
    <property type="component" value="Chromosome 5L"/>
</dbReference>
<dbReference type="Bgee" id="380260">
    <property type="expression patterns" value="Expressed in blastula and 19 other cell types or tissues"/>
</dbReference>
<dbReference type="GO" id="GO:0005634">
    <property type="term" value="C:nucleus"/>
    <property type="evidence" value="ECO:0000318"/>
    <property type="project" value="GO_Central"/>
</dbReference>
<dbReference type="GO" id="GO:0003714">
    <property type="term" value="F:transcription corepressor activity"/>
    <property type="evidence" value="ECO:0000318"/>
    <property type="project" value="GO_Central"/>
</dbReference>
<dbReference type="GO" id="GO:0008270">
    <property type="term" value="F:zinc ion binding"/>
    <property type="evidence" value="ECO:0007669"/>
    <property type="project" value="UniProtKB-KW"/>
</dbReference>
<dbReference type="GO" id="GO:0006357">
    <property type="term" value="P:regulation of transcription by RNA polymerase II"/>
    <property type="evidence" value="ECO:0000318"/>
    <property type="project" value="GO_Central"/>
</dbReference>
<dbReference type="CDD" id="cd16716">
    <property type="entry name" value="vRING-HC_IRF2BP2"/>
    <property type="match status" value="1"/>
</dbReference>
<dbReference type="FunFam" id="1.10.10.1580:FF:000001">
    <property type="entry name" value="interferon regulatory factor 2-binding protein 2"/>
    <property type="match status" value="1"/>
</dbReference>
<dbReference type="Gene3D" id="1.10.10.1580">
    <property type="entry name" value="Interferon regulatory factor 2-binding protein"/>
    <property type="match status" value="1"/>
</dbReference>
<dbReference type="InterPro" id="IPR044882">
    <property type="entry name" value="I2BP1/2_C3HC4-RING_sf"/>
</dbReference>
<dbReference type="InterPro" id="IPR022750">
    <property type="entry name" value="Interferon_reg_fac2-bd1_2_Znf"/>
</dbReference>
<dbReference type="PANTHER" id="PTHR10816:SF18">
    <property type="entry name" value="INTERFERON REGULATORY FACTOR 2-BINDING PROTEIN 2"/>
    <property type="match status" value="1"/>
</dbReference>
<dbReference type="PANTHER" id="PTHR10816">
    <property type="entry name" value="MYELIN TRANSCRIPTION FACTOR 1-RELATED"/>
    <property type="match status" value="1"/>
</dbReference>
<dbReference type="Pfam" id="PF11261">
    <property type="entry name" value="IRF-2BP1_2"/>
    <property type="match status" value="1"/>
</dbReference>
<dbReference type="Pfam" id="PF25457">
    <property type="entry name" value="IRF-2BP1_2_M"/>
    <property type="match status" value="1"/>
</dbReference>
<dbReference type="Pfam" id="PF25454">
    <property type="entry name" value="zf-C3HC4_IRF-2BP1_2"/>
    <property type="match status" value="1"/>
</dbReference>
<dbReference type="SUPFAM" id="SSF57850">
    <property type="entry name" value="RING/U-box"/>
    <property type="match status" value="1"/>
</dbReference>
<gene>
    <name type="primary">irf2bp2</name>
</gene>